<name>SELO_ECOL6</name>
<keyword id="KW-0067">ATP-binding</keyword>
<keyword id="KW-0460">Magnesium</keyword>
<keyword id="KW-0464">Manganese</keyword>
<keyword id="KW-0479">Metal-binding</keyword>
<keyword id="KW-0547">Nucleotide-binding</keyword>
<keyword id="KW-0548">Nucleotidyltransferase</keyword>
<keyword id="KW-1185">Reference proteome</keyword>
<keyword id="KW-0808">Transferase</keyword>
<sequence length="478" mass="54624">MTLSFITRWRDELPETYTALSPTPLNNARLIWHNTELANTLSIPSSLFKNGAGVWGGENLLPGMSPLAQVYSGHQFGVWAGQLGDGRGILLGEQLLADGTTMDWHLKGAGLTPYSRMGDGRAVLRSTIRESLASEAMHYLGIPTTRALSIVTSDSPVYRETVESGAMLMRVAPSHLRFGHFEHFYYRREPEKVRQLADFAIRHYWSHLDDEEDKYRLWFTDVVARTASLIAQWQTVGFAHGVMNTDNMSLLGLTLDYGPFGFLDDYEPGFICNHSDHQGRYSFDNQPAVALWNLQRLAQTLSPFVAVDALNEALDSYQQVLLTHYGQRMRQKLGFMTEQKEDNALLNELFSLMARERSDYTRTFRMLSLTEQHSAASPLRDEFIDRAAFDDWFARYRGRLQQDEITDSERQQLMQSVNPALVLRNWLAQRAIEAAEKDDMTELHRLHEALRNPFSDRDDDYVSRPPDWGKRLEVSCSS</sequence>
<organism>
    <name type="scientific">Escherichia coli O6:H1 (strain CFT073 / ATCC 700928 / UPEC)</name>
    <dbReference type="NCBI Taxonomy" id="199310"/>
    <lineage>
        <taxon>Bacteria</taxon>
        <taxon>Pseudomonadati</taxon>
        <taxon>Pseudomonadota</taxon>
        <taxon>Gammaproteobacteria</taxon>
        <taxon>Enterobacterales</taxon>
        <taxon>Enterobacteriaceae</taxon>
        <taxon>Escherichia</taxon>
    </lineage>
</organism>
<feature type="chain" id="PRO_0000121417" description="Protein nucleotidyltransferase YdiU">
    <location>
        <begin position="1"/>
        <end position="478"/>
    </location>
</feature>
<feature type="active site" description="Proton acceptor" evidence="1">
    <location>
        <position position="246"/>
    </location>
</feature>
<feature type="binding site" evidence="1">
    <location>
        <position position="84"/>
    </location>
    <ligand>
        <name>ATP</name>
        <dbReference type="ChEBI" id="CHEBI:30616"/>
    </ligand>
</feature>
<feature type="binding site" evidence="1">
    <location>
        <position position="86"/>
    </location>
    <ligand>
        <name>ATP</name>
        <dbReference type="ChEBI" id="CHEBI:30616"/>
    </ligand>
</feature>
<feature type="binding site" evidence="1">
    <location>
        <position position="87"/>
    </location>
    <ligand>
        <name>ATP</name>
        <dbReference type="ChEBI" id="CHEBI:30616"/>
    </ligand>
</feature>
<feature type="binding site" evidence="1">
    <location>
        <position position="107"/>
    </location>
    <ligand>
        <name>ATP</name>
        <dbReference type="ChEBI" id="CHEBI:30616"/>
    </ligand>
</feature>
<feature type="binding site" evidence="1">
    <location>
        <position position="119"/>
    </location>
    <ligand>
        <name>ATP</name>
        <dbReference type="ChEBI" id="CHEBI:30616"/>
    </ligand>
</feature>
<feature type="binding site" evidence="1">
    <location>
        <position position="120"/>
    </location>
    <ligand>
        <name>ATP</name>
        <dbReference type="ChEBI" id="CHEBI:30616"/>
    </ligand>
</feature>
<feature type="binding site" evidence="1">
    <location>
        <position position="170"/>
    </location>
    <ligand>
        <name>ATP</name>
        <dbReference type="ChEBI" id="CHEBI:30616"/>
    </ligand>
</feature>
<feature type="binding site" evidence="1">
    <location>
        <position position="177"/>
    </location>
    <ligand>
        <name>ATP</name>
        <dbReference type="ChEBI" id="CHEBI:30616"/>
    </ligand>
</feature>
<feature type="binding site" evidence="1">
    <location>
        <position position="247"/>
    </location>
    <ligand>
        <name>Mg(2+)</name>
        <dbReference type="ChEBI" id="CHEBI:18420"/>
    </ligand>
</feature>
<feature type="binding site" evidence="1">
    <location>
        <position position="256"/>
    </location>
    <ligand>
        <name>ATP</name>
        <dbReference type="ChEBI" id="CHEBI:30616"/>
    </ligand>
</feature>
<feature type="binding site" evidence="1">
    <location>
        <position position="256"/>
    </location>
    <ligand>
        <name>Mg(2+)</name>
        <dbReference type="ChEBI" id="CHEBI:18420"/>
    </ligand>
</feature>
<protein>
    <recommendedName>
        <fullName evidence="1">Protein nucleotidyltransferase YdiU</fullName>
        <ecNumber evidence="1">2.7.7.-</ecNumber>
    </recommendedName>
    <alternativeName>
        <fullName evidence="1">Protein adenylyltransferase YdiU</fullName>
        <ecNumber evidence="1">2.7.7.108</ecNumber>
    </alternativeName>
    <alternativeName>
        <fullName evidence="1">Protein uridylyltransferase YdiU</fullName>
        <ecNumber evidence="1">2.7.7.-</ecNumber>
    </alternativeName>
</protein>
<evidence type="ECO:0000255" key="1">
    <source>
        <dbReference type="HAMAP-Rule" id="MF_00692"/>
    </source>
</evidence>
<accession>Q8FH30</accession>
<reference key="1">
    <citation type="journal article" date="2002" name="Proc. Natl. Acad. Sci. U.S.A.">
        <title>Extensive mosaic structure revealed by the complete genome sequence of uropathogenic Escherichia coli.</title>
        <authorList>
            <person name="Welch R.A."/>
            <person name="Burland V."/>
            <person name="Plunkett G. III"/>
            <person name="Redford P."/>
            <person name="Roesch P."/>
            <person name="Rasko D."/>
            <person name="Buckles E.L."/>
            <person name="Liou S.-R."/>
            <person name="Boutin A."/>
            <person name="Hackett J."/>
            <person name="Stroud D."/>
            <person name="Mayhew G.F."/>
            <person name="Rose D.J."/>
            <person name="Zhou S."/>
            <person name="Schwartz D.C."/>
            <person name="Perna N.T."/>
            <person name="Mobley H.L.T."/>
            <person name="Donnenberg M.S."/>
            <person name="Blattner F.R."/>
        </authorList>
    </citation>
    <scope>NUCLEOTIDE SEQUENCE [LARGE SCALE GENOMIC DNA]</scope>
    <source>
        <strain>CFT073 / ATCC 700928 / UPEC</strain>
    </source>
</reference>
<gene>
    <name evidence="1" type="primary">ydiU</name>
    <name evidence="1" type="synonym">selO</name>
    <name type="ordered locus">c2102</name>
</gene>
<comment type="function">
    <text evidence="1">Nucleotidyltransferase involved in the post-translational modification of proteins. It can catalyze the addition of adenosine monophosphate (AMP) or uridine monophosphate (UMP) to a protein, resulting in modifications known as AMPylation and UMPylation.</text>
</comment>
<comment type="catalytic activity">
    <reaction evidence="1">
        <text>L-seryl-[protein] + ATP = 3-O-(5'-adenylyl)-L-seryl-[protein] + diphosphate</text>
        <dbReference type="Rhea" id="RHEA:58120"/>
        <dbReference type="Rhea" id="RHEA-COMP:9863"/>
        <dbReference type="Rhea" id="RHEA-COMP:15073"/>
        <dbReference type="ChEBI" id="CHEBI:29999"/>
        <dbReference type="ChEBI" id="CHEBI:30616"/>
        <dbReference type="ChEBI" id="CHEBI:33019"/>
        <dbReference type="ChEBI" id="CHEBI:142516"/>
        <dbReference type="EC" id="2.7.7.108"/>
    </reaction>
</comment>
<comment type="catalytic activity">
    <reaction evidence="1">
        <text>L-threonyl-[protein] + ATP = 3-O-(5'-adenylyl)-L-threonyl-[protein] + diphosphate</text>
        <dbReference type="Rhea" id="RHEA:54292"/>
        <dbReference type="Rhea" id="RHEA-COMP:11060"/>
        <dbReference type="Rhea" id="RHEA-COMP:13847"/>
        <dbReference type="ChEBI" id="CHEBI:30013"/>
        <dbReference type="ChEBI" id="CHEBI:30616"/>
        <dbReference type="ChEBI" id="CHEBI:33019"/>
        <dbReference type="ChEBI" id="CHEBI:138113"/>
        <dbReference type="EC" id="2.7.7.108"/>
    </reaction>
</comment>
<comment type="catalytic activity">
    <reaction evidence="1">
        <text>L-tyrosyl-[protein] + ATP = O-(5'-adenylyl)-L-tyrosyl-[protein] + diphosphate</text>
        <dbReference type="Rhea" id="RHEA:54288"/>
        <dbReference type="Rhea" id="RHEA-COMP:10136"/>
        <dbReference type="Rhea" id="RHEA-COMP:13846"/>
        <dbReference type="ChEBI" id="CHEBI:30616"/>
        <dbReference type="ChEBI" id="CHEBI:33019"/>
        <dbReference type="ChEBI" id="CHEBI:46858"/>
        <dbReference type="ChEBI" id="CHEBI:83624"/>
        <dbReference type="EC" id="2.7.7.108"/>
    </reaction>
</comment>
<comment type="catalytic activity">
    <reaction evidence="1">
        <text>L-histidyl-[protein] + UTP = N(tele)-(5'-uridylyl)-L-histidyl-[protein] + diphosphate</text>
        <dbReference type="Rhea" id="RHEA:83891"/>
        <dbReference type="Rhea" id="RHEA-COMP:9745"/>
        <dbReference type="Rhea" id="RHEA-COMP:20239"/>
        <dbReference type="ChEBI" id="CHEBI:29979"/>
        <dbReference type="ChEBI" id="CHEBI:33019"/>
        <dbReference type="ChEBI" id="CHEBI:46398"/>
        <dbReference type="ChEBI" id="CHEBI:233474"/>
    </reaction>
</comment>
<comment type="catalytic activity">
    <reaction evidence="1">
        <text>L-seryl-[protein] + UTP = O-(5'-uridylyl)-L-seryl-[protein] + diphosphate</text>
        <dbReference type="Rhea" id="RHEA:64604"/>
        <dbReference type="Rhea" id="RHEA-COMP:9863"/>
        <dbReference type="Rhea" id="RHEA-COMP:16635"/>
        <dbReference type="ChEBI" id="CHEBI:29999"/>
        <dbReference type="ChEBI" id="CHEBI:33019"/>
        <dbReference type="ChEBI" id="CHEBI:46398"/>
        <dbReference type="ChEBI" id="CHEBI:156051"/>
    </reaction>
</comment>
<comment type="catalytic activity">
    <reaction evidence="1">
        <text>L-tyrosyl-[protein] + UTP = O-(5'-uridylyl)-L-tyrosyl-[protein] + diphosphate</text>
        <dbReference type="Rhea" id="RHEA:83887"/>
        <dbReference type="Rhea" id="RHEA-COMP:10136"/>
        <dbReference type="Rhea" id="RHEA-COMP:20238"/>
        <dbReference type="ChEBI" id="CHEBI:33019"/>
        <dbReference type="ChEBI" id="CHEBI:46398"/>
        <dbReference type="ChEBI" id="CHEBI:46858"/>
        <dbReference type="ChEBI" id="CHEBI:90602"/>
    </reaction>
</comment>
<comment type="cofactor">
    <cofactor evidence="1">
        <name>Mg(2+)</name>
        <dbReference type="ChEBI" id="CHEBI:18420"/>
    </cofactor>
    <cofactor evidence="1">
        <name>Mn(2+)</name>
        <dbReference type="ChEBI" id="CHEBI:29035"/>
    </cofactor>
</comment>
<comment type="similarity">
    <text evidence="1">Belongs to the SELO family.</text>
</comment>
<dbReference type="EC" id="2.7.7.-" evidence="1"/>
<dbReference type="EC" id="2.7.7.108" evidence="1"/>
<dbReference type="EMBL" id="AE014075">
    <property type="protein sequence ID" value="AAN80562.1"/>
    <property type="molecule type" value="Genomic_DNA"/>
</dbReference>
<dbReference type="RefSeq" id="WP_000175635.1">
    <property type="nucleotide sequence ID" value="NZ_CP051263.1"/>
</dbReference>
<dbReference type="SMR" id="Q8FH30"/>
<dbReference type="STRING" id="199310.c2102"/>
<dbReference type="KEGG" id="ecc:c2102"/>
<dbReference type="eggNOG" id="COG0397">
    <property type="taxonomic scope" value="Bacteria"/>
</dbReference>
<dbReference type="HOGENOM" id="CLU_010245_4_0_6"/>
<dbReference type="BioCyc" id="ECOL199310:C2102-MONOMER"/>
<dbReference type="Proteomes" id="UP000001410">
    <property type="component" value="Chromosome"/>
</dbReference>
<dbReference type="GO" id="GO:0070733">
    <property type="term" value="F:AMPylase activity"/>
    <property type="evidence" value="ECO:0007669"/>
    <property type="project" value="RHEA"/>
</dbReference>
<dbReference type="GO" id="GO:0005524">
    <property type="term" value="F:ATP binding"/>
    <property type="evidence" value="ECO:0007669"/>
    <property type="project" value="UniProtKB-UniRule"/>
</dbReference>
<dbReference type="GO" id="GO:0000287">
    <property type="term" value="F:magnesium ion binding"/>
    <property type="evidence" value="ECO:0007669"/>
    <property type="project" value="UniProtKB-UniRule"/>
</dbReference>
<dbReference type="HAMAP" id="MF_00692">
    <property type="entry name" value="YdiU_SelO"/>
    <property type="match status" value="1"/>
</dbReference>
<dbReference type="InterPro" id="IPR054838">
    <property type="entry name" value="adnlytase_SelO"/>
</dbReference>
<dbReference type="InterPro" id="IPR003846">
    <property type="entry name" value="SelO"/>
</dbReference>
<dbReference type="NCBIfam" id="NF040880">
    <property type="entry name" value="adnlytase_SelO"/>
    <property type="match status" value="1"/>
</dbReference>
<dbReference type="NCBIfam" id="NF000658">
    <property type="entry name" value="PRK00029.1"/>
    <property type="match status" value="1"/>
</dbReference>
<dbReference type="PANTHER" id="PTHR32057">
    <property type="entry name" value="PROTEIN ADENYLYLTRANSFERASE SELO, MITOCHONDRIAL"/>
    <property type="match status" value="1"/>
</dbReference>
<dbReference type="PANTHER" id="PTHR32057:SF14">
    <property type="entry name" value="PROTEIN ADENYLYLTRANSFERASE SELO, MITOCHONDRIAL"/>
    <property type="match status" value="1"/>
</dbReference>
<dbReference type="Pfam" id="PF02696">
    <property type="entry name" value="SelO"/>
    <property type="match status" value="1"/>
</dbReference>
<proteinExistence type="inferred from homology"/>